<accession>Q2IXP1</accession>
<evidence type="ECO:0000255" key="1">
    <source>
        <dbReference type="HAMAP-Rule" id="MF_01341"/>
    </source>
</evidence>
<evidence type="ECO:0000256" key="2">
    <source>
        <dbReference type="SAM" id="MobiDB-lite"/>
    </source>
</evidence>
<evidence type="ECO:0000305" key="3"/>
<comment type="function">
    <text evidence="1">Binds to the 23S rRNA.</text>
</comment>
<comment type="subunit">
    <text evidence="1">Part of the 50S ribosomal subunit.</text>
</comment>
<comment type="similarity">
    <text evidence="1">Belongs to the universal ribosomal protein uL15 family.</text>
</comment>
<reference key="1">
    <citation type="submission" date="2006-01" db="EMBL/GenBank/DDBJ databases">
        <title>Complete sequence of Rhodopseudomonas palustris HaA2.</title>
        <authorList>
            <consortium name="US DOE Joint Genome Institute"/>
            <person name="Copeland A."/>
            <person name="Lucas S."/>
            <person name="Lapidus A."/>
            <person name="Barry K."/>
            <person name="Detter J.C."/>
            <person name="Glavina T."/>
            <person name="Hammon N."/>
            <person name="Israni S."/>
            <person name="Pitluck S."/>
            <person name="Chain P."/>
            <person name="Malfatti S."/>
            <person name="Shin M."/>
            <person name="Vergez L."/>
            <person name="Schmutz J."/>
            <person name="Larimer F."/>
            <person name="Land M."/>
            <person name="Hauser L."/>
            <person name="Pelletier D.A."/>
            <person name="Kyrpides N."/>
            <person name="Anderson I."/>
            <person name="Oda Y."/>
            <person name="Harwood C.S."/>
            <person name="Richardson P."/>
        </authorList>
    </citation>
    <scope>NUCLEOTIDE SEQUENCE [LARGE SCALE GENOMIC DNA]</scope>
    <source>
        <strain>HaA2</strain>
    </source>
</reference>
<proteinExistence type="inferred from homology"/>
<sequence>MKLSEISDNPGARKKRMRIGRGIGSGKGKTGGRGGKGQTARSGVRIKGFEGGQMPLHRRLPKRGFNNIFRLEFAEINLDRLQDAIDAKTIDAGAVINAESLVAAGVLRRSRDGVRLLGRGELKAKLTIEVHGATKSAIEAVEKAGGSVKILAPKKDEGEAA</sequence>
<feature type="chain" id="PRO_0000251553" description="Large ribosomal subunit protein uL15">
    <location>
        <begin position="1"/>
        <end position="161"/>
    </location>
</feature>
<feature type="region of interest" description="Disordered" evidence="2">
    <location>
        <begin position="1"/>
        <end position="43"/>
    </location>
</feature>
<feature type="compositionally biased region" description="Gly residues" evidence="2">
    <location>
        <begin position="21"/>
        <end position="37"/>
    </location>
</feature>
<keyword id="KW-1185">Reference proteome</keyword>
<keyword id="KW-0687">Ribonucleoprotein</keyword>
<keyword id="KW-0689">Ribosomal protein</keyword>
<keyword id="KW-0694">RNA-binding</keyword>
<keyword id="KW-0699">rRNA-binding</keyword>
<name>RL15_RHOP2</name>
<protein>
    <recommendedName>
        <fullName evidence="1">Large ribosomal subunit protein uL15</fullName>
    </recommendedName>
    <alternativeName>
        <fullName evidence="3">50S ribosomal protein L15</fullName>
    </alternativeName>
</protein>
<dbReference type="EMBL" id="CP000250">
    <property type="protein sequence ID" value="ABD07019.1"/>
    <property type="molecule type" value="Genomic_DNA"/>
</dbReference>
<dbReference type="RefSeq" id="WP_011441204.1">
    <property type="nucleotide sequence ID" value="NC_007778.1"/>
</dbReference>
<dbReference type="SMR" id="Q2IXP1"/>
<dbReference type="STRING" id="316058.RPB_2314"/>
<dbReference type="KEGG" id="rpb:RPB_2314"/>
<dbReference type="eggNOG" id="COG0200">
    <property type="taxonomic scope" value="Bacteria"/>
</dbReference>
<dbReference type="HOGENOM" id="CLU_055188_4_0_5"/>
<dbReference type="OrthoDB" id="9810293at2"/>
<dbReference type="Proteomes" id="UP000008809">
    <property type="component" value="Chromosome"/>
</dbReference>
<dbReference type="GO" id="GO:0022625">
    <property type="term" value="C:cytosolic large ribosomal subunit"/>
    <property type="evidence" value="ECO:0007669"/>
    <property type="project" value="TreeGrafter"/>
</dbReference>
<dbReference type="GO" id="GO:0019843">
    <property type="term" value="F:rRNA binding"/>
    <property type="evidence" value="ECO:0007669"/>
    <property type="project" value="UniProtKB-UniRule"/>
</dbReference>
<dbReference type="GO" id="GO:0003735">
    <property type="term" value="F:structural constituent of ribosome"/>
    <property type="evidence" value="ECO:0007669"/>
    <property type="project" value="InterPro"/>
</dbReference>
<dbReference type="GO" id="GO:0006412">
    <property type="term" value="P:translation"/>
    <property type="evidence" value="ECO:0007669"/>
    <property type="project" value="UniProtKB-UniRule"/>
</dbReference>
<dbReference type="Gene3D" id="3.100.10.10">
    <property type="match status" value="1"/>
</dbReference>
<dbReference type="HAMAP" id="MF_01341">
    <property type="entry name" value="Ribosomal_uL15"/>
    <property type="match status" value="1"/>
</dbReference>
<dbReference type="InterPro" id="IPR030878">
    <property type="entry name" value="Ribosomal_uL15"/>
</dbReference>
<dbReference type="InterPro" id="IPR021131">
    <property type="entry name" value="Ribosomal_uL15/eL18"/>
</dbReference>
<dbReference type="InterPro" id="IPR036227">
    <property type="entry name" value="Ribosomal_uL15/eL18_sf"/>
</dbReference>
<dbReference type="InterPro" id="IPR005749">
    <property type="entry name" value="Ribosomal_uL15_bac-type"/>
</dbReference>
<dbReference type="InterPro" id="IPR001196">
    <property type="entry name" value="Ribosomal_uL15_CS"/>
</dbReference>
<dbReference type="NCBIfam" id="TIGR01071">
    <property type="entry name" value="rplO_bact"/>
    <property type="match status" value="1"/>
</dbReference>
<dbReference type="PANTHER" id="PTHR12934">
    <property type="entry name" value="50S RIBOSOMAL PROTEIN L15"/>
    <property type="match status" value="1"/>
</dbReference>
<dbReference type="PANTHER" id="PTHR12934:SF11">
    <property type="entry name" value="LARGE RIBOSOMAL SUBUNIT PROTEIN UL15M"/>
    <property type="match status" value="1"/>
</dbReference>
<dbReference type="Pfam" id="PF00828">
    <property type="entry name" value="Ribosomal_L27A"/>
    <property type="match status" value="1"/>
</dbReference>
<dbReference type="SUPFAM" id="SSF52080">
    <property type="entry name" value="Ribosomal proteins L15p and L18e"/>
    <property type="match status" value="1"/>
</dbReference>
<dbReference type="PROSITE" id="PS00475">
    <property type="entry name" value="RIBOSOMAL_L15"/>
    <property type="match status" value="1"/>
</dbReference>
<organism>
    <name type="scientific">Rhodopseudomonas palustris (strain HaA2)</name>
    <dbReference type="NCBI Taxonomy" id="316058"/>
    <lineage>
        <taxon>Bacteria</taxon>
        <taxon>Pseudomonadati</taxon>
        <taxon>Pseudomonadota</taxon>
        <taxon>Alphaproteobacteria</taxon>
        <taxon>Hyphomicrobiales</taxon>
        <taxon>Nitrobacteraceae</taxon>
        <taxon>Rhodopseudomonas</taxon>
    </lineage>
</organism>
<gene>
    <name evidence="1" type="primary">rplO</name>
    <name type="ordered locus">RPB_2314</name>
</gene>